<feature type="chain" id="PRO_0000199467" description="Agamous-like MADS-box protein AGL9 homolog">
    <location>
        <begin position="1"/>
        <end position="250"/>
    </location>
</feature>
<feature type="domain" description="MADS-box" evidence="2">
    <location>
        <begin position="3"/>
        <end position="57"/>
    </location>
</feature>
<feature type="domain" description="K-box" evidence="3">
    <location>
        <begin position="87"/>
        <end position="177"/>
    </location>
</feature>
<protein>
    <recommendedName>
        <fullName>Agamous-like MADS-box protein AGL9 homolog</fullName>
    </recommendedName>
    <alternativeName>
        <fullName>OM1</fullName>
    </alternativeName>
</protein>
<accession>Q38694</accession>
<organism>
    <name type="scientific">Aranda deborah</name>
    <name type="common">Orchid</name>
    <dbReference type="NCBI Taxonomy" id="29714"/>
    <lineage>
        <taxon>Eukaryota</taxon>
        <taxon>Viridiplantae</taxon>
        <taxon>Streptophyta</taxon>
        <taxon>Embryophyta</taxon>
        <taxon>Tracheophyta</taxon>
        <taxon>Spermatophyta</taxon>
        <taxon>Magnoliopsida</taxon>
        <taxon>Liliopsida</taxon>
        <taxon>Asparagales</taxon>
        <taxon>Orchidaceae</taxon>
        <taxon>Epidendroideae</taxon>
        <taxon>Vandeae</taxon>
        <taxon>Aeridinae</taxon>
        <taxon>x Aranda</taxon>
    </lineage>
</organism>
<sequence>MGRGRVELKMIENKINRQVTFAKRRKRLLKKAYELSVLCDAEVALIIFSNRGKLYEFCSSTSMLKTLEKYQKCNFGSPESTIISRETQSSQQEYLKLKNRVEALQRSQRNLLGEDLGPLGSKELEQLERQLDSSLRQIRSTRTQFMLDQLADLQRREQMLCEANKTLKRRFEESSQANQQQVWDPSNTHAVGYGRQPAQHHGEAFYHPLECEPTLQIGYHSDITMATATASTVNNYMPPGWLGQISGSYE</sequence>
<dbReference type="EMBL" id="X69107">
    <property type="protein sequence ID" value="CAA48859.1"/>
    <property type="molecule type" value="mRNA"/>
</dbReference>
<dbReference type="PIR" id="S40405">
    <property type="entry name" value="S40405"/>
</dbReference>
<dbReference type="SMR" id="Q38694"/>
<dbReference type="GO" id="GO:0005634">
    <property type="term" value="C:nucleus"/>
    <property type="evidence" value="ECO:0007669"/>
    <property type="project" value="UniProtKB-SubCell"/>
</dbReference>
<dbReference type="GO" id="GO:0003700">
    <property type="term" value="F:DNA-binding transcription factor activity"/>
    <property type="evidence" value="ECO:0007669"/>
    <property type="project" value="InterPro"/>
</dbReference>
<dbReference type="GO" id="GO:0046983">
    <property type="term" value="F:protein dimerization activity"/>
    <property type="evidence" value="ECO:0007669"/>
    <property type="project" value="InterPro"/>
</dbReference>
<dbReference type="GO" id="GO:0000977">
    <property type="term" value="F:RNA polymerase II transcription regulatory region sequence-specific DNA binding"/>
    <property type="evidence" value="ECO:0007669"/>
    <property type="project" value="InterPro"/>
</dbReference>
<dbReference type="GO" id="GO:0045944">
    <property type="term" value="P:positive regulation of transcription by RNA polymerase II"/>
    <property type="evidence" value="ECO:0007669"/>
    <property type="project" value="InterPro"/>
</dbReference>
<dbReference type="CDD" id="cd00265">
    <property type="entry name" value="MADS_MEF2_like"/>
    <property type="match status" value="1"/>
</dbReference>
<dbReference type="FunFam" id="3.40.1810.10:FF:000004">
    <property type="entry name" value="MADS-box transcription factor 1"/>
    <property type="match status" value="1"/>
</dbReference>
<dbReference type="Gene3D" id="3.40.1810.10">
    <property type="entry name" value="Transcription factor, MADS-box"/>
    <property type="match status" value="1"/>
</dbReference>
<dbReference type="InterPro" id="IPR050142">
    <property type="entry name" value="MADS-box/MEF2_TF"/>
</dbReference>
<dbReference type="InterPro" id="IPR033896">
    <property type="entry name" value="MEF2-like_N"/>
</dbReference>
<dbReference type="InterPro" id="IPR002487">
    <property type="entry name" value="TF_Kbox"/>
</dbReference>
<dbReference type="InterPro" id="IPR002100">
    <property type="entry name" value="TF_MADSbox"/>
</dbReference>
<dbReference type="InterPro" id="IPR036879">
    <property type="entry name" value="TF_MADSbox_sf"/>
</dbReference>
<dbReference type="PANTHER" id="PTHR48019">
    <property type="entry name" value="SERUM RESPONSE FACTOR HOMOLOG"/>
    <property type="match status" value="1"/>
</dbReference>
<dbReference type="Pfam" id="PF01486">
    <property type="entry name" value="K-box"/>
    <property type="match status" value="1"/>
</dbReference>
<dbReference type="Pfam" id="PF00319">
    <property type="entry name" value="SRF-TF"/>
    <property type="match status" value="1"/>
</dbReference>
<dbReference type="PRINTS" id="PR00404">
    <property type="entry name" value="MADSDOMAIN"/>
</dbReference>
<dbReference type="SMART" id="SM00432">
    <property type="entry name" value="MADS"/>
    <property type="match status" value="1"/>
</dbReference>
<dbReference type="SUPFAM" id="SSF55455">
    <property type="entry name" value="SRF-like"/>
    <property type="match status" value="1"/>
</dbReference>
<dbReference type="PROSITE" id="PS51297">
    <property type="entry name" value="K_BOX"/>
    <property type="match status" value="1"/>
</dbReference>
<dbReference type="PROSITE" id="PS00350">
    <property type="entry name" value="MADS_BOX_1"/>
    <property type="match status" value="1"/>
</dbReference>
<dbReference type="PROSITE" id="PS50066">
    <property type="entry name" value="MADS_BOX_2"/>
    <property type="match status" value="1"/>
</dbReference>
<proteinExistence type="evidence at transcript level"/>
<keyword id="KW-0238">DNA-binding</keyword>
<keyword id="KW-0539">Nucleus</keyword>
<keyword id="KW-0804">Transcription</keyword>
<keyword id="KW-0805">Transcription regulation</keyword>
<reference key="1">
    <citation type="journal article" date="1993" name="Plant Mol. Biol.">
        <title>Nucleotide sequence of a flower-specific MADS box cDNA clone from orchid.</title>
        <authorList>
            <person name="Lu Z.X."/>
            <person name="Wu M."/>
            <person name="Loh C.S."/>
            <person name="Yeong C.Y."/>
            <person name="Goh C.J."/>
        </authorList>
    </citation>
    <scope>NUCLEOTIDE SEQUENCE [MRNA]</scope>
</reference>
<comment type="function">
    <text evidence="1">Probable transcription factor active in inflorescence development and floral organogenesis.</text>
</comment>
<comment type="subcellular location">
    <subcellularLocation>
        <location evidence="2">Nucleus</location>
    </subcellularLocation>
</comment>
<comment type="tissue specificity">
    <text>Expressed in petals and weakly in sepals but not in the column (gynostemium).</text>
</comment>
<comment type="developmental stage">
    <text>Expressed in mature flowers and not in young developing inflorescences or young floral buds.</text>
</comment>
<name>AGL9_ARADE</name>
<evidence type="ECO:0000250" key="1"/>
<evidence type="ECO:0000255" key="2">
    <source>
        <dbReference type="PROSITE-ProRule" id="PRU00251"/>
    </source>
</evidence>
<evidence type="ECO:0000255" key="3">
    <source>
        <dbReference type="PROSITE-ProRule" id="PRU00629"/>
    </source>
</evidence>